<feature type="signal peptide" evidence="1">
    <location>
        <begin position="1"/>
        <end position="20"/>
    </location>
</feature>
<feature type="chain" id="PRO_0000017569" description="C-type lectin domain-containing protein 161">
    <location>
        <begin position="21"/>
        <end position="862"/>
    </location>
</feature>
<feature type="domain" description="C-type lectin 1" evidence="2">
    <location>
        <begin position="41"/>
        <end position="154"/>
    </location>
</feature>
<feature type="domain" description="C-type lectin 2" evidence="2">
    <location>
        <begin position="562"/>
        <end position="687"/>
    </location>
</feature>
<feature type="domain" description="C-type lectin 3" evidence="2">
    <location>
        <begin position="716"/>
        <end position="828"/>
    </location>
</feature>
<feature type="region of interest" description="Disordered" evidence="3">
    <location>
        <begin position="162"/>
        <end position="291"/>
    </location>
</feature>
<feature type="region of interest" description="Disordered" evidence="3">
    <location>
        <begin position="377"/>
        <end position="437"/>
    </location>
</feature>
<feature type="region of interest" description="Disordered" evidence="3">
    <location>
        <begin position="450"/>
        <end position="469"/>
    </location>
</feature>
<feature type="region of interest" description="Disordered" evidence="3">
    <location>
        <begin position="474"/>
        <end position="504"/>
    </location>
</feature>
<feature type="compositionally biased region" description="Basic and acidic residues" evidence="3">
    <location>
        <begin position="198"/>
        <end position="218"/>
    </location>
</feature>
<feature type="compositionally biased region" description="Basic and acidic residues" evidence="3">
    <location>
        <begin position="242"/>
        <end position="252"/>
    </location>
</feature>
<feature type="compositionally biased region" description="Low complexity" evidence="3">
    <location>
        <begin position="265"/>
        <end position="283"/>
    </location>
</feature>
<feature type="compositionally biased region" description="Low complexity" evidence="3">
    <location>
        <begin position="388"/>
        <end position="418"/>
    </location>
</feature>
<feature type="compositionally biased region" description="Basic and acidic residues" evidence="3">
    <location>
        <begin position="455"/>
        <end position="467"/>
    </location>
</feature>
<feature type="compositionally biased region" description="Basic and acidic residues" evidence="3">
    <location>
        <begin position="478"/>
        <end position="491"/>
    </location>
</feature>
<feature type="glycosylation site" description="N-linked (GlcNAc...) asparagine" evidence="1">
    <location>
        <position position="22"/>
    </location>
</feature>
<feature type="glycosylation site" description="N-linked (GlcNAc...) asparagine" evidence="1">
    <location>
        <position position="91"/>
    </location>
</feature>
<feature type="glycosylation site" description="N-linked (GlcNAc...) asparagine" evidence="1">
    <location>
        <position position="222"/>
    </location>
</feature>
<feature type="glycosylation site" description="N-linked (GlcNAc...) asparagine" evidence="1">
    <location>
        <position position="258"/>
    </location>
</feature>
<feature type="glycosylation site" description="N-linked (GlcNAc...) asparagine" evidence="1">
    <location>
        <position position="279"/>
    </location>
</feature>
<feature type="glycosylation site" description="N-linked (GlcNAc...) asparagine" evidence="1">
    <location>
        <position position="352"/>
    </location>
</feature>
<feature type="glycosylation site" description="N-linked (GlcNAc...) asparagine" evidence="1">
    <location>
        <position position="559"/>
    </location>
</feature>
<feature type="glycosylation site" description="N-linked (GlcNAc...) asparagine" evidence="1">
    <location>
        <position position="765"/>
    </location>
</feature>
<feature type="glycosylation site" description="N-linked (GlcNAc...) asparagine" evidence="1">
    <location>
        <position position="831"/>
    </location>
</feature>
<feature type="glycosylation site" description="N-linked (GlcNAc...) asparagine" evidence="1">
    <location>
        <position position="857"/>
    </location>
</feature>
<feature type="disulfide bond" evidence="2">
    <location>
        <begin position="62"/>
        <end position="153"/>
    </location>
</feature>
<feature type="disulfide bond" evidence="2">
    <location>
        <begin position="653"/>
        <end position="678"/>
    </location>
</feature>
<feature type="disulfide bond" evidence="2">
    <location>
        <begin position="807"/>
        <end position="819"/>
    </location>
</feature>
<sequence>MYRRTTLWFLLLFQPILVFAQNRTELYECKIGTVNPLASTSLNACFKLYNTPKSFQAARRYCVSLGGQLADKINKDDSSLYSANADLEVANSTKFWVGASNLKCNIAWENGGEIEFNDMWAPESRYYGVAIDKMSIGGLWHTVPVGQKLPFVCTFQGKSNEAGPAPVHAMRAPAKKRVPKVEKPEEKDIDESLNAALSDKKEKKEVASDKKKESKKDEEDINESMNAALSDERKKSASLASSDKKESSKKDESSDEANLSASQVANAEMSASISASSANSSSDESSDEAYDSAEIEMRKKIGKTVIAMKSQEMASQSDDYDKYTEEDLLSAAASLIGGYILNAHWADSRTTNTSSFDSQTDEETLNMMMAIAEQIAMTMRSSKRRESSSSNTDSESASISESSQASEQAVMAAAMSAKSSKKSESSSKDESEDSASLNLEQKASAAASAALASKSKSDSSDQSKDQKSANVALAVVSENKHPTKKPEDPKSTKTTTEEPDIDESLNAALANQRSTTTKNSDLTTIITTVKPNALPIAIVAKQSEKDPACPAEWTQFNTNATAPALCFKRYEKPMNFEDARLFCVGKGGHLASIHNERQLLLLSALLHNNGPDALSDQTWIGLNRIHQKYYVYEDETAMDFTRWLPGAPNINDCTVFTGNELPNYPHKGTQYKFGDFPCEEVQKSVLCEVTLGKDKLKSQTTCQDGWSYYSHDGTAKNGKCYKRIDQSKKFSEAREVCKVENSYVASVQNEGEARFVSALVQTEKNYTVDEQTWIGYVKYDRDFGWEDGNKGLQFDPWTEKMPRQKKCTVFTGNEIHENCRSQFRFVSVDCNKTQRSVLCSKPPMKNGTPFVYKDTDNSSKKI</sequence>
<protein>
    <recommendedName>
        <fullName>C-type lectin domain-containing protein 161</fullName>
    </recommendedName>
</protein>
<name>CL161_CAEEL</name>
<accession>P34472</accession>
<gene>
    <name type="primary">clec-161</name>
    <name type="ORF">F58A4.5</name>
</gene>
<reference key="1">
    <citation type="journal article" date="1994" name="Nature">
        <title>2.2 Mb of contiguous nucleotide sequence from chromosome III of C. elegans.</title>
        <authorList>
            <person name="Wilson R."/>
            <person name="Ainscough R."/>
            <person name="Anderson K."/>
            <person name="Baynes C."/>
            <person name="Berks M."/>
            <person name="Bonfield J."/>
            <person name="Burton J."/>
            <person name="Connell M."/>
            <person name="Copsey T."/>
            <person name="Cooper J."/>
            <person name="Coulson A."/>
            <person name="Craxton M."/>
            <person name="Dear S."/>
            <person name="Du Z."/>
            <person name="Durbin R."/>
            <person name="Favello A."/>
            <person name="Fraser A."/>
            <person name="Fulton L."/>
            <person name="Gardner A."/>
            <person name="Green P."/>
            <person name="Hawkins T."/>
            <person name="Hillier L."/>
            <person name="Jier M."/>
            <person name="Johnston L."/>
            <person name="Jones M."/>
            <person name="Kershaw J."/>
            <person name="Kirsten J."/>
            <person name="Laisster N."/>
            <person name="Latreille P."/>
            <person name="Lightning J."/>
            <person name="Lloyd C."/>
            <person name="Mortimore B."/>
            <person name="O'Callaghan M."/>
            <person name="Parsons J."/>
            <person name="Percy C."/>
            <person name="Rifken L."/>
            <person name="Roopra A."/>
            <person name="Saunders D."/>
            <person name="Shownkeen R."/>
            <person name="Sims M."/>
            <person name="Smaldon N."/>
            <person name="Smith A."/>
            <person name="Smith M."/>
            <person name="Sonnhammer E."/>
            <person name="Staden R."/>
            <person name="Sulston J."/>
            <person name="Thierry-Mieg J."/>
            <person name="Thomas K."/>
            <person name="Vaudin M."/>
            <person name="Vaughan K."/>
            <person name="Waterston R."/>
            <person name="Watson A."/>
            <person name="Weinstock L."/>
            <person name="Wilkinson-Sproat J."/>
            <person name="Wohldman P."/>
        </authorList>
    </citation>
    <scope>NUCLEOTIDE SEQUENCE [LARGE SCALE GENOMIC DNA]</scope>
    <source>
        <strain>Bristol N2</strain>
    </source>
</reference>
<reference key="2">
    <citation type="journal article" date="1998" name="Science">
        <title>Genome sequence of the nematode C. elegans: a platform for investigating biology.</title>
        <authorList>
            <consortium name="The C. elegans sequencing consortium"/>
        </authorList>
    </citation>
    <scope>NUCLEOTIDE SEQUENCE [LARGE SCALE GENOMIC DNA]</scope>
    <source>
        <strain>Bristol N2</strain>
    </source>
</reference>
<evidence type="ECO:0000255" key="1"/>
<evidence type="ECO:0000255" key="2">
    <source>
        <dbReference type="PROSITE-ProRule" id="PRU00040"/>
    </source>
</evidence>
<evidence type="ECO:0000256" key="3">
    <source>
        <dbReference type="SAM" id="MobiDB-lite"/>
    </source>
</evidence>
<evidence type="ECO:0000305" key="4"/>
<keyword id="KW-1015">Disulfide bond</keyword>
<keyword id="KW-0325">Glycoprotein</keyword>
<keyword id="KW-0430">Lectin</keyword>
<keyword id="KW-1185">Reference proteome</keyword>
<keyword id="KW-0677">Repeat</keyword>
<keyword id="KW-0964">Secreted</keyword>
<keyword id="KW-0732">Signal</keyword>
<organism>
    <name type="scientific">Caenorhabditis elegans</name>
    <dbReference type="NCBI Taxonomy" id="6239"/>
    <lineage>
        <taxon>Eukaryota</taxon>
        <taxon>Metazoa</taxon>
        <taxon>Ecdysozoa</taxon>
        <taxon>Nematoda</taxon>
        <taxon>Chromadorea</taxon>
        <taxon>Rhabditida</taxon>
        <taxon>Rhabditina</taxon>
        <taxon>Rhabditomorpha</taxon>
        <taxon>Rhabditoidea</taxon>
        <taxon>Rhabditidae</taxon>
        <taxon>Peloderinae</taxon>
        <taxon>Caenorhabditis</taxon>
    </lineage>
</organism>
<dbReference type="EMBL" id="Z22179">
    <property type="protein sequence ID" value="CAA80162.3"/>
    <property type="molecule type" value="Genomic_DNA"/>
</dbReference>
<dbReference type="PIR" id="S40977">
    <property type="entry name" value="S40977"/>
</dbReference>
<dbReference type="RefSeq" id="NP_499125.3">
    <property type="nucleotide sequence ID" value="NM_066724.5"/>
</dbReference>
<dbReference type="SMR" id="P34472"/>
<dbReference type="FunCoup" id="P34472">
    <property type="interactions" value="1522"/>
</dbReference>
<dbReference type="STRING" id="6239.F58A4.5.1"/>
<dbReference type="GlyCosmos" id="P34472">
    <property type="glycosylation" value="10 sites, No reported glycans"/>
</dbReference>
<dbReference type="PaxDb" id="6239-F58A4.5"/>
<dbReference type="EnsemblMetazoa" id="F58A4.5.1">
    <property type="protein sequence ID" value="F58A4.5.1"/>
    <property type="gene ID" value="WBGene00010228"/>
</dbReference>
<dbReference type="GeneID" id="176357"/>
<dbReference type="KEGG" id="cel:CELE_F58A4.5"/>
<dbReference type="UCSC" id="F58A4.5">
    <property type="organism name" value="c. elegans"/>
</dbReference>
<dbReference type="AGR" id="WB:WBGene00010228"/>
<dbReference type="CTD" id="176357"/>
<dbReference type="WormBase" id="F58A4.5">
    <property type="protein sequence ID" value="CE43487"/>
    <property type="gene ID" value="WBGene00010228"/>
    <property type="gene designation" value="clec-161"/>
</dbReference>
<dbReference type="eggNOG" id="KOG1075">
    <property type="taxonomic scope" value="Eukaryota"/>
</dbReference>
<dbReference type="GeneTree" id="ENSGT01050000244842"/>
<dbReference type="HOGENOM" id="CLU_006736_0_0_1"/>
<dbReference type="InParanoid" id="P34472"/>
<dbReference type="OMA" id="FTGNEIH"/>
<dbReference type="OrthoDB" id="5828449at2759"/>
<dbReference type="Reactome" id="R-CEL-1236978">
    <property type="pathway name" value="Cross-presentation of soluble exogenous antigens (endosomes)"/>
</dbReference>
<dbReference type="Reactome" id="R-CEL-1482788">
    <property type="pathway name" value="Acyl chain remodelling of PC"/>
</dbReference>
<dbReference type="Reactome" id="R-CEL-1482801">
    <property type="pathway name" value="Acyl chain remodelling of PS"/>
</dbReference>
<dbReference type="Reactome" id="R-CEL-1482839">
    <property type="pathway name" value="Acyl chain remodelling of PE"/>
</dbReference>
<dbReference type="Reactome" id="R-CEL-1482922">
    <property type="pathway name" value="Acyl chain remodelling of PI"/>
</dbReference>
<dbReference type="Reactome" id="R-CEL-1482925">
    <property type="pathway name" value="Acyl chain remodelling of PG"/>
</dbReference>
<dbReference type="Reactome" id="R-CEL-1483166">
    <property type="pathway name" value="Synthesis of PA"/>
</dbReference>
<dbReference type="Reactome" id="R-CEL-6803157">
    <property type="pathway name" value="Antimicrobial peptides"/>
</dbReference>
<dbReference type="PRO" id="PR:P34472"/>
<dbReference type="Proteomes" id="UP000001940">
    <property type="component" value="Chromosome III"/>
</dbReference>
<dbReference type="Bgee" id="WBGene00010228">
    <property type="expression patterns" value="Expressed in adult organism and 3 other cell types or tissues"/>
</dbReference>
<dbReference type="GO" id="GO:0005576">
    <property type="term" value="C:extracellular region"/>
    <property type="evidence" value="ECO:0007669"/>
    <property type="project" value="UniProtKB-SubCell"/>
</dbReference>
<dbReference type="GO" id="GO:0030246">
    <property type="term" value="F:carbohydrate binding"/>
    <property type="evidence" value="ECO:0007669"/>
    <property type="project" value="UniProtKB-KW"/>
</dbReference>
<dbReference type="GO" id="GO:0038023">
    <property type="term" value="F:signaling receptor activity"/>
    <property type="evidence" value="ECO:0000318"/>
    <property type="project" value="GO_Central"/>
</dbReference>
<dbReference type="CDD" id="cd00037">
    <property type="entry name" value="CLECT"/>
    <property type="match status" value="3"/>
</dbReference>
<dbReference type="Gene3D" id="3.10.100.10">
    <property type="entry name" value="Mannose-Binding Protein A, subunit A"/>
    <property type="match status" value="3"/>
</dbReference>
<dbReference type="InterPro" id="IPR001304">
    <property type="entry name" value="C-type_lectin-like"/>
</dbReference>
<dbReference type="InterPro" id="IPR016186">
    <property type="entry name" value="C-type_lectin-like/link_sf"/>
</dbReference>
<dbReference type="InterPro" id="IPR050111">
    <property type="entry name" value="C-type_lectin/snaclec_domain"/>
</dbReference>
<dbReference type="InterPro" id="IPR016187">
    <property type="entry name" value="CTDL_fold"/>
</dbReference>
<dbReference type="PANTHER" id="PTHR22803">
    <property type="entry name" value="MANNOSE, PHOSPHOLIPASE, LECTIN RECEPTOR RELATED"/>
    <property type="match status" value="1"/>
</dbReference>
<dbReference type="Pfam" id="PF00059">
    <property type="entry name" value="Lectin_C"/>
    <property type="match status" value="3"/>
</dbReference>
<dbReference type="SMART" id="SM00034">
    <property type="entry name" value="CLECT"/>
    <property type="match status" value="3"/>
</dbReference>
<dbReference type="SUPFAM" id="SSF56436">
    <property type="entry name" value="C-type lectin-like"/>
    <property type="match status" value="3"/>
</dbReference>
<dbReference type="PROSITE" id="PS50041">
    <property type="entry name" value="C_TYPE_LECTIN_2"/>
    <property type="match status" value="3"/>
</dbReference>
<proteinExistence type="inferred from homology"/>
<comment type="subcellular location">
    <subcellularLocation>
        <location evidence="4">Secreted</location>
    </subcellularLocation>
</comment>